<reference key="1">
    <citation type="submission" date="2007-02" db="EMBL/GenBank/DDBJ databases">
        <title>Complete sequence of chromosome of Yersinia pestis Pestoides F.</title>
        <authorList>
            <consortium name="US DOE Joint Genome Institute"/>
            <person name="Copeland A."/>
            <person name="Lucas S."/>
            <person name="Lapidus A."/>
            <person name="Barry K."/>
            <person name="Detter J.C."/>
            <person name="Glavina del Rio T."/>
            <person name="Hammon N."/>
            <person name="Israni S."/>
            <person name="Dalin E."/>
            <person name="Tice H."/>
            <person name="Pitluck S."/>
            <person name="Di Bartolo G."/>
            <person name="Chain P."/>
            <person name="Malfatti S."/>
            <person name="Shin M."/>
            <person name="Vergez L."/>
            <person name="Schmutz J."/>
            <person name="Larimer F."/>
            <person name="Land M."/>
            <person name="Hauser L."/>
            <person name="Worsham P."/>
            <person name="Chu M."/>
            <person name="Bearden S."/>
            <person name="Garcia E."/>
            <person name="Richardson P."/>
        </authorList>
    </citation>
    <scope>NUCLEOTIDE SEQUENCE [LARGE SCALE GENOMIC DNA]</scope>
    <source>
        <strain>Pestoides F</strain>
    </source>
</reference>
<dbReference type="EC" id="3.1.2.6" evidence="1"/>
<dbReference type="EMBL" id="CP000668">
    <property type="protein sequence ID" value="ABP40018.1"/>
    <property type="molecule type" value="Genomic_DNA"/>
</dbReference>
<dbReference type="RefSeq" id="WP_011906275.1">
    <property type="nucleotide sequence ID" value="NZ_CP009715.1"/>
</dbReference>
<dbReference type="SMR" id="A4TL56"/>
<dbReference type="KEGG" id="ypp:YPDSF_1633"/>
<dbReference type="PATRIC" id="fig|386656.14.peg.2130"/>
<dbReference type="UniPathway" id="UPA00619">
    <property type="reaction ID" value="UER00676"/>
</dbReference>
<dbReference type="GO" id="GO:0004416">
    <property type="term" value="F:hydroxyacylglutathione hydrolase activity"/>
    <property type="evidence" value="ECO:0007669"/>
    <property type="project" value="UniProtKB-UniRule"/>
</dbReference>
<dbReference type="GO" id="GO:0046872">
    <property type="term" value="F:metal ion binding"/>
    <property type="evidence" value="ECO:0007669"/>
    <property type="project" value="UniProtKB-KW"/>
</dbReference>
<dbReference type="GO" id="GO:0019243">
    <property type="term" value="P:methylglyoxal catabolic process to D-lactate via S-lactoyl-glutathione"/>
    <property type="evidence" value="ECO:0007669"/>
    <property type="project" value="InterPro"/>
</dbReference>
<dbReference type="CDD" id="cd07723">
    <property type="entry name" value="hydroxyacylglutathione_hydrolase_MBL-fold"/>
    <property type="match status" value="1"/>
</dbReference>
<dbReference type="Gene3D" id="3.60.15.10">
    <property type="entry name" value="Ribonuclease Z/Hydroxyacylglutathione hydrolase-like"/>
    <property type="match status" value="1"/>
</dbReference>
<dbReference type="HAMAP" id="MF_01374">
    <property type="entry name" value="Glyoxalase_2"/>
    <property type="match status" value="1"/>
</dbReference>
<dbReference type="InterPro" id="IPR035680">
    <property type="entry name" value="Clx_II_MBL"/>
</dbReference>
<dbReference type="InterPro" id="IPR050110">
    <property type="entry name" value="Glyoxalase_II_hydrolase"/>
</dbReference>
<dbReference type="InterPro" id="IPR032282">
    <property type="entry name" value="HAGH_C"/>
</dbReference>
<dbReference type="InterPro" id="IPR017782">
    <property type="entry name" value="Hydroxyacylglutathione_Hdrlase"/>
</dbReference>
<dbReference type="InterPro" id="IPR001279">
    <property type="entry name" value="Metallo-B-lactamas"/>
</dbReference>
<dbReference type="InterPro" id="IPR036866">
    <property type="entry name" value="RibonucZ/Hydroxyglut_hydro"/>
</dbReference>
<dbReference type="NCBIfam" id="TIGR03413">
    <property type="entry name" value="GSH_gloB"/>
    <property type="match status" value="1"/>
</dbReference>
<dbReference type="PANTHER" id="PTHR43705">
    <property type="entry name" value="HYDROXYACYLGLUTATHIONE HYDROLASE"/>
    <property type="match status" value="1"/>
</dbReference>
<dbReference type="PANTHER" id="PTHR43705:SF1">
    <property type="entry name" value="HYDROXYACYLGLUTATHIONE HYDROLASE GLOB"/>
    <property type="match status" value="1"/>
</dbReference>
<dbReference type="Pfam" id="PF16123">
    <property type="entry name" value="HAGH_C"/>
    <property type="match status" value="1"/>
</dbReference>
<dbReference type="Pfam" id="PF00753">
    <property type="entry name" value="Lactamase_B"/>
    <property type="match status" value="1"/>
</dbReference>
<dbReference type="PIRSF" id="PIRSF005457">
    <property type="entry name" value="Glx"/>
    <property type="match status" value="1"/>
</dbReference>
<dbReference type="SMART" id="SM00849">
    <property type="entry name" value="Lactamase_B"/>
    <property type="match status" value="1"/>
</dbReference>
<dbReference type="SUPFAM" id="SSF56281">
    <property type="entry name" value="Metallo-hydrolase/oxidoreductase"/>
    <property type="match status" value="1"/>
</dbReference>
<name>GLO2_YERPP</name>
<evidence type="ECO:0000255" key="1">
    <source>
        <dbReference type="HAMAP-Rule" id="MF_01374"/>
    </source>
</evidence>
<comment type="function">
    <text evidence="1">Thiolesterase that catalyzes the hydrolysis of S-D-lactoyl-glutathione to form glutathione and D-lactic acid.</text>
</comment>
<comment type="catalytic activity">
    <reaction evidence="1">
        <text>an S-(2-hydroxyacyl)glutathione + H2O = a 2-hydroxy carboxylate + glutathione + H(+)</text>
        <dbReference type="Rhea" id="RHEA:21864"/>
        <dbReference type="ChEBI" id="CHEBI:15377"/>
        <dbReference type="ChEBI" id="CHEBI:15378"/>
        <dbReference type="ChEBI" id="CHEBI:57925"/>
        <dbReference type="ChEBI" id="CHEBI:58896"/>
        <dbReference type="ChEBI" id="CHEBI:71261"/>
        <dbReference type="EC" id="3.1.2.6"/>
    </reaction>
</comment>
<comment type="cofactor">
    <cofactor evidence="1">
        <name>Zn(2+)</name>
        <dbReference type="ChEBI" id="CHEBI:29105"/>
    </cofactor>
    <text evidence="1">Binds 2 Zn(2+) ions per subunit.</text>
</comment>
<comment type="pathway">
    <text evidence="1">Secondary metabolite metabolism; methylglyoxal degradation; (R)-lactate from methylglyoxal: step 2/2.</text>
</comment>
<comment type="subunit">
    <text evidence="1">Monomer.</text>
</comment>
<comment type="similarity">
    <text evidence="1">Belongs to the metallo-beta-lactamase superfamily. Glyoxalase II family.</text>
</comment>
<gene>
    <name evidence="1" type="primary">gloB</name>
    <name type="ordered locus">YPDSF_1633</name>
</gene>
<sequence>MNLISIPAFQDNYIWLLANRQKHCVIVDPGESAPVLATLAQGQYVPQAILLTHHHNDHVGGVADLRHHFPDIPVYGPQETAKKGATVIVNDGDSLTIAGQNYTIIAVPGHTLGHIAYYSSPYLFCGDTLFSAGCGRLLEGTPEQMYASIQRLAQLPDETLICCAHEYTLSNLKFAHAILPADQDIATYQQQIEQLRSKNLPSLPVKLQFERKINVFLRCNDIDLQRKIETTSPPDSLVSVFCELRSRKDSF</sequence>
<keyword id="KW-0378">Hydrolase</keyword>
<keyword id="KW-0479">Metal-binding</keyword>
<keyword id="KW-0862">Zinc</keyword>
<accession>A4TL56</accession>
<protein>
    <recommendedName>
        <fullName evidence="1">Hydroxyacylglutathione hydrolase</fullName>
        <ecNumber evidence="1">3.1.2.6</ecNumber>
    </recommendedName>
    <alternativeName>
        <fullName evidence="1">Glyoxalase II</fullName>
        <shortName evidence="1">Glx II</shortName>
    </alternativeName>
</protein>
<organism>
    <name type="scientific">Yersinia pestis (strain Pestoides F)</name>
    <dbReference type="NCBI Taxonomy" id="386656"/>
    <lineage>
        <taxon>Bacteria</taxon>
        <taxon>Pseudomonadati</taxon>
        <taxon>Pseudomonadota</taxon>
        <taxon>Gammaproteobacteria</taxon>
        <taxon>Enterobacterales</taxon>
        <taxon>Yersiniaceae</taxon>
        <taxon>Yersinia</taxon>
    </lineage>
</organism>
<feature type="chain" id="PRO_0000309730" description="Hydroxyacylglutathione hydrolase">
    <location>
        <begin position="1"/>
        <end position="251"/>
    </location>
</feature>
<feature type="binding site" evidence="1">
    <location>
        <position position="53"/>
    </location>
    <ligand>
        <name>Zn(2+)</name>
        <dbReference type="ChEBI" id="CHEBI:29105"/>
        <label>1</label>
    </ligand>
</feature>
<feature type="binding site" evidence="1">
    <location>
        <position position="55"/>
    </location>
    <ligand>
        <name>Zn(2+)</name>
        <dbReference type="ChEBI" id="CHEBI:29105"/>
        <label>1</label>
    </ligand>
</feature>
<feature type="binding site" evidence="1">
    <location>
        <position position="57"/>
    </location>
    <ligand>
        <name>Zn(2+)</name>
        <dbReference type="ChEBI" id="CHEBI:29105"/>
        <label>2</label>
    </ligand>
</feature>
<feature type="binding site" evidence="1">
    <location>
        <position position="58"/>
    </location>
    <ligand>
        <name>Zn(2+)</name>
        <dbReference type="ChEBI" id="CHEBI:29105"/>
        <label>2</label>
    </ligand>
</feature>
<feature type="binding site" evidence="1">
    <location>
        <position position="110"/>
    </location>
    <ligand>
        <name>Zn(2+)</name>
        <dbReference type="ChEBI" id="CHEBI:29105"/>
        <label>1</label>
    </ligand>
</feature>
<feature type="binding site" evidence="1">
    <location>
        <position position="127"/>
    </location>
    <ligand>
        <name>Zn(2+)</name>
        <dbReference type="ChEBI" id="CHEBI:29105"/>
        <label>1</label>
    </ligand>
</feature>
<feature type="binding site" evidence="1">
    <location>
        <position position="127"/>
    </location>
    <ligand>
        <name>Zn(2+)</name>
        <dbReference type="ChEBI" id="CHEBI:29105"/>
        <label>2</label>
    </ligand>
</feature>
<feature type="binding site" evidence="1">
    <location>
        <position position="165"/>
    </location>
    <ligand>
        <name>Zn(2+)</name>
        <dbReference type="ChEBI" id="CHEBI:29105"/>
        <label>2</label>
    </ligand>
</feature>
<proteinExistence type="inferred from homology"/>